<evidence type="ECO:0000255" key="1">
    <source>
        <dbReference type="HAMAP-Rule" id="MF_00298"/>
    </source>
</evidence>
<proteinExistence type="inferred from homology"/>
<comment type="function">
    <text evidence="1">Accelerates the degradation of transcripts by removing pyrophosphate from the 5'-end of triphosphorylated RNA, leading to a more labile monophosphorylated state that can stimulate subsequent ribonuclease cleavage.</text>
</comment>
<comment type="cofactor">
    <cofactor evidence="1">
        <name>a divalent metal cation</name>
        <dbReference type="ChEBI" id="CHEBI:60240"/>
    </cofactor>
</comment>
<comment type="similarity">
    <text evidence="1">Belongs to the Nudix hydrolase family. RppH subfamily.</text>
</comment>
<keyword id="KW-0378">Hydrolase</keyword>
<dbReference type="EC" id="3.6.1.-" evidence="1"/>
<dbReference type="EMBL" id="CP000803">
    <property type="protein sequence ID" value="ABU62307.1"/>
    <property type="molecule type" value="Genomic_DNA"/>
</dbReference>
<dbReference type="RefSeq" id="WP_003017197.1">
    <property type="nucleotide sequence ID" value="NC_009749.1"/>
</dbReference>
<dbReference type="SMR" id="A7NEA4"/>
<dbReference type="KEGG" id="fta:FTA_1832"/>
<dbReference type="HOGENOM" id="CLU_087195_3_1_6"/>
<dbReference type="GO" id="GO:0016462">
    <property type="term" value="F:pyrophosphatase activity"/>
    <property type="evidence" value="ECO:0007669"/>
    <property type="project" value="UniProtKB-ARBA"/>
</dbReference>
<dbReference type="CDD" id="cd03671">
    <property type="entry name" value="NUDIX_Ap4A_hydrolase_plant_like"/>
    <property type="match status" value="1"/>
</dbReference>
<dbReference type="Gene3D" id="3.90.79.10">
    <property type="entry name" value="Nucleoside Triphosphate Pyrophosphohydrolase"/>
    <property type="match status" value="1"/>
</dbReference>
<dbReference type="HAMAP" id="MF_00298">
    <property type="entry name" value="Nudix_RppH"/>
    <property type="match status" value="1"/>
</dbReference>
<dbReference type="InterPro" id="IPR020476">
    <property type="entry name" value="Nudix_hydrolase"/>
</dbReference>
<dbReference type="InterPro" id="IPR015797">
    <property type="entry name" value="NUDIX_hydrolase-like_dom_sf"/>
</dbReference>
<dbReference type="InterPro" id="IPR020084">
    <property type="entry name" value="NUDIX_hydrolase_CS"/>
</dbReference>
<dbReference type="InterPro" id="IPR000086">
    <property type="entry name" value="NUDIX_hydrolase_dom"/>
</dbReference>
<dbReference type="InterPro" id="IPR022927">
    <property type="entry name" value="RppH"/>
</dbReference>
<dbReference type="NCBIfam" id="NF001936">
    <property type="entry name" value="PRK00714.1-3"/>
    <property type="match status" value="1"/>
</dbReference>
<dbReference type="NCBIfam" id="NF001937">
    <property type="entry name" value="PRK00714.1-4"/>
    <property type="match status" value="1"/>
</dbReference>
<dbReference type="NCBIfam" id="NF001938">
    <property type="entry name" value="PRK00714.1-5"/>
    <property type="match status" value="1"/>
</dbReference>
<dbReference type="PANTHER" id="PTHR43736">
    <property type="entry name" value="ADP-RIBOSE PYROPHOSPHATASE"/>
    <property type="match status" value="1"/>
</dbReference>
<dbReference type="PANTHER" id="PTHR43736:SF1">
    <property type="entry name" value="DIHYDRONEOPTERIN TRIPHOSPHATE DIPHOSPHATASE"/>
    <property type="match status" value="1"/>
</dbReference>
<dbReference type="Pfam" id="PF00293">
    <property type="entry name" value="NUDIX"/>
    <property type="match status" value="1"/>
</dbReference>
<dbReference type="PRINTS" id="PR00502">
    <property type="entry name" value="NUDIXFAMILY"/>
</dbReference>
<dbReference type="SUPFAM" id="SSF55811">
    <property type="entry name" value="Nudix"/>
    <property type="match status" value="1"/>
</dbReference>
<dbReference type="PROSITE" id="PS51462">
    <property type="entry name" value="NUDIX"/>
    <property type="match status" value="1"/>
</dbReference>
<dbReference type="PROSITE" id="PS00893">
    <property type="entry name" value="NUDIX_BOX"/>
    <property type="match status" value="1"/>
</dbReference>
<gene>
    <name evidence="1" type="primary">rppH</name>
    <name evidence="1" type="synonym">nudH</name>
    <name type="ordered locus">FTA_1832</name>
</gene>
<sequence>MIDKSGYRANVAIVLLNKQNRVFWGQRRNRTSWQFPQGGVATGETPLQAMYRELHEEIGLRPQDVEVIASTRDWYKYDIPDSLVRTKEPICIGQKQKWFLLKLKSPESYIDLDANDSPEFDNWRWVSYWYPINHVVYFKQEVYRKALTYFKEYIA</sequence>
<accession>A7NEA4</accession>
<organism>
    <name type="scientific">Francisella tularensis subsp. holarctica (strain FTNF002-00 / FTA)</name>
    <dbReference type="NCBI Taxonomy" id="458234"/>
    <lineage>
        <taxon>Bacteria</taxon>
        <taxon>Pseudomonadati</taxon>
        <taxon>Pseudomonadota</taxon>
        <taxon>Gammaproteobacteria</taxon>
        <taxon>Thiotrichales</taxon>
        <taxon>Francisellaceae</taxon>
        <taxon>Francisella</taxon>
    </lineage>
</organism>
<reference key="1">
    <citation type="journal article" date="2009" name="PLoS ONE">
        <title>Complete genome sequence of Francisella tularensis subspecies holarctica FTNF002-00.</title>
        <authorList>
            <person name="Barabote R.D."/>
            <person name="Xie G."/>
            <person name="Brettin T.S."/>
            <person name="Hinrichs S.H."/>
            <person name="Fey P.D."/>
            <person name="Jay J.J."/>
            <person name="Engle J.L."/>
            <person name="Godbole S.D."/>
            <person name="Noronha J.M."/>
            <person name="Scheuermann R.H."/>
            <person name="Zhou L.W."/>
            <person name="Lion C."/>
            <person name="Dempsey M.P."/>
        </authorList>
    </citation>
    <scope>NUCLEOTIDE SEQUENCE [LARGE SCALE GENOMIC DNA]</scope>
    <source>
        <strain>FTNF002-00 / FTA</strain>
    </source>
</reference>
<name>RPPH_FRATF</name>
<feature type="chain" id="PRO_1000021945" description="RNA pyrophosphohydrolase">
    <location>
        <begin position="1"/>
        <end position="155"/>
    </location>
</feature>
<feature type="domain" description="Nudix hydrolase" evidence="1">
    <location>
        <begin position="6"/>
        <end position="148"/>
    </location>
</feature>
<feature type="short sequence motif" description="Nudix box">
    <location>
        <begin position="38"/>
        <end position="59"/>
    </location>
</feature>
<protein>
    <recommendedName>
        <fullName evidence="1">RNA pyrophosphohydrolase</fullName>
        <ecNumber evidence="1">3.6.1.-</ecNumber>
    </recommendedName>
    <alternativeName>
        <fullName evidence="1">(Di)nucleoside polyphosphate hydrolase</fullName>
    </alternativeName>
</protein>